<proteinExistence type="evidence at protein level"/>
<reference key="1">
    <citation type="journal article" date="2001" name="Cancer Res.">
        <title>The FOXP1 winged helix transcription factor is a novel candidate tumor suppressor gene on chromosome 3p.</title>
        <authorList>
            <person name="Banham A.H."/>
            <person name="Beasley N."/>
            <person name="Campo E."/>
            <person name="Fernandez P.L."/>
            <person name="Fidler C."/>
            <person name="Gatter K."/>
            <person name="Jones M."/>
            <person name="Mason D.Y."/>
            <person name="Prime J.E."/>
            <person name="Trougouboff P."/>
            <person name="Wood K."/>
            <person name="Cordell J.L."/>
        </authorList>
    </citation>
    <scope>NUCLEOTIDE SEQUENCE [MRNA] (ISOFORM 1)</scope>
    <scope>NUCLEOTIDE SEQUENCE [MRNA] OF 210-677 (ISOFORM 7)</scope>
    <scope>PARTIAL NUCLEOTIDE SEQUENCE [MRNA] (ISOFORM 3)</scope>
    <source>
        <tissue>Testis</tissue>
    </source>
</reference>
<reference key="2">
    <citation type="submission" date="2003-05" db="EMBL/GenBank/DDBJ databases">
        <title>Cloning of human full-length CDSs in BD Creator(TM) system donor vector.</title>
        <authorList>
            <person name="Kalnine N."/>
            <person name="Chen X."/>
            <person name="Rolfs A."/>
            <person name="Halleck A."/>
            <person name="Hines L."/>
            <person name="Eisenstein S."/>
            <person name="Koundinya M."/>
            <person name="Raphael J."/>
            <person name="Moreira D."/>
            <person name="Kelley T."/>
            <person name="LaBaer J."/>
            <person name="Lin Y."/>
            <person name="Phelan M."/>
            <person name="Farmer A."/>
        </authorList>
    </citation>
    <scope>NUCLEOTIDE SEQUENCE [LARGE SCALE MRNA] (ISOFORM 5)</scope>
</reference>
<reference key="3">
    <citation type="journal article" date="2004" name="Nat. Genet.">
        <title>Complete sequencing and characterization of 21,243 full-length human cDNAs.</title>
        <authorList>
            <person name="Ota T."/>
            <person name="Suzuki Y."/>
            <person name="Nishikawa T."/>
            <person name="Otsuki T."/>
            <person name="Sugiyama T."/>
            <person name="Irie R."/>
            <person name="Wakamatsu A."/>
            <person name="Hayashi K."/>
            <person name="Sato H."/>
            <person name="Nagai K."/>
            <person name="Kimura K."/>
            <person name="Makita H."/>
            <person name="Sekine M."/>
            <person name="Obayashi M."/>
            <person name="Nishi T."/>
            <person name="Shibahara T."/>
            <person name="Tanaka T."/>
            <person name="Ishii S."/>
            <person name="Yamamoto J."/>
            <person name="Saito K."/>
            <person name="Kawai Y."/>
            <person name="Isono Y."/>
            <person name="Nakamura Y."/>
            <person name="Nagahari K."/>
            <person name="Murakami K."/>
            <person name="Yasuda T."/>
            <person name="Iwayanagi T."/>
            <person name="Wagatsuma M."/>
            <person name="Shiratori A."/>
            <person name="Sudo H."/>
            <person name="Hosoiri T."/>
            <person name="Kaku Y."/>
            <person name="Kodaira H."/>
            <person name="Kondo H."/>
            <person name="Sugawara M."/>
            <person name="Takahashi M."/>
            <person name="Kanda K."/>
            <person name="Yokoi T."/>
            <person name="Furuya T."/>
            <person name="Kikkawa E."/>
            <person name="Omura Y."/>
            <person name="Abe K."/>
            <person name="Kamihara K."/>
            <person name="Katsuta N."/>
            <person name="Sato K."/>
            <person name="Tanikawa M."/>
            <person name="Yamazaki M."/>
            <person name="Ninomiya K."/>
            <person name="Ishibashi T."/>
            <person name="Yamashita H."/>
            <person name="Murakawa K."/>
            <person name="Fujimori K."/>
            <person name="Tanai H."/>
            <person name="Kimata M."/>
            <person name="Watanabe M."/>
            <person name="Hiraoka S."/>
            <person name="Chiba Y."/>
            <person name="Ishida S."/>
            <person name="Ono Y."/>
            <person name="Takiguchi S."/>
            <person name="Watanabe S."/>
            <person name="Yosida M."/>
            <person name="Hotuta T."/>
            <person name="Kusano J."/>
            <person name="Kanehori K."/>
            <person name="Takahashi-Fujii A."/>
            <person name="Hara H."/>
            <person name="Tanase T.-O."/>
            <person name="Nomura Y."/>
            <person name="Togiya S."/>
            <person name="Komai F."/>
            <person name="Hara R."/>
            <person name="Takeuchi K."/>
            <person name="Arita M."/>
            <person name="Imose N."/>
            <person name="Musashino K."/>
            <person name="Yuuki H."/>
            <person name="Oshima A."/>
            <person name="Sasaki N."/>
            <person name="Aotsuka S."/>
            <person name="Yoshikawa Y."/>
            <person name="Matsunawa H."/>
            <person name="Ichihara T."/>
            <person name="Shiohata N."/>
            <person name="Sano S."/>
            <person name="Moriya S."/>
            <person name="Momiyama H."/>
            <person name="Satoh N."/>
            <person name="Takami S."/>
            <person name="Terashima Y."/>
            <person name="Suzuki O."/>
            <person name="Nakagawa S."/>
            <person name="Senoh A."/>
            <person name="Mizoguchi H."/>
            <person name="Goto Y."/>
            <person name="Shimizu F."/>
            <person name="Wakebe H."/>
            <person name="Hishigaki H."/>
            <person name="Watanabe T."/>
            <person name="Sugiyama A."/>
            <person name="Takemoto M."/>
            <person name="Kawakami B."/>
            <person name="Yamazaki M."/>
            <person name="Watanabe K."/>
            <person name="Kumagai A."/>
            <person name="Itakura S."/>
            <person name="Fukuzumi Y."/>
            <person name="Fujimori Y."/>
            <person name="Komiyama M."/>
            <person name="Tashiro H."/>
            <person name="Tanigami A."/>
            <person name="Fujiwara T."/>
            <person name="Ono T."/>
            <person name="Yamada K."/>
            <person name="Fujii Y."/>
            <person name="Ozaki K."/>
            <person name="Hirao M."/>
            <person name="Ohmori Y."/>
            <person name="Kawabata A."/>
            <person name="Hikiji T."/>
            <person name="Kobatake N."/>
            <person name="Inagaki H."/>
            <person name="Ikema Y."/>
            <person name="Okamoto S."/>
            <person name="Okitani R."/>
            <person name="Kawakami T."/>
            <person name="Noguchi S."/>
            <person name="Itoh T."/>
            <person name="Shigeta K."/>
            <person name="Senba T."/>
            <person name="Matsumura K."/>
            <person name="Nakajima Y."/>
            <person name="Mizuno T."/>
            <person name="Morinaga M."/>
            <person name="Sasaki M."/>
            <person name="Togashi T."/>
            <person name="Oyama M."/>
            <person name="Hata H."/>
            <person name="Watanabe M."/>
            <person name="Komatsu T."/>
            <person name="Mizushima-Sugano J."/>
            <person name="Satoh T."/>
            <person name="Shirai Y."/>
            <person name="Takahashi Y."/>
            <person name="Nakagawa K."/>
            <person name="Okumura K."/>
            <person name="Nagase T."/>
            <person name="Nomura N."/>
            <person name="Kikuchi H."/>
            <person name="Masuho Y."/>
            <person name="Yamashita R."/>
            <person name="Nakai K."/>
            <person name="Yada T."/>
            <person name="Nakamura Y."/>
            <person name="Ohara O."/>
            <person name="Isogai T."/>
            <person name="Sugano S."/>
        </authorList>
    </citation>
    <scope>NUCLEOTIDE SEQUENCE [LARGE SCALE MRNA] (ISOFORMS 6 AND 7)</scope>
    <scope>NUCLEOTIDE SEQUENCE [LARGE SCALE MRNA] OF 101-677 (ISOFORM 4)</scope>
    <source>
        <tissue>Embryonic head</tissue>
        <tissue>Tongue</tissue>
    </source>
</reference>
<reference key="4">
    <citation type="journal article" date="2006" name="Nature">
        <title>The DNA sequence, annotation and analysis of human chromosome 3.</title>
        <authorList>
            <person name="Muzny D.M."/>
            <person name="Scherer S.E."/>
            <person name="Kaul R."/>
            <person name="Wang J."/>
            <person name="Yu J."/>
            <person name="Sudbrak R."/>
            <person name="Buhay C.J."/>
            <person name="Chen R."/>
            <person name="Cree A."/>
            <person name="Ding Y."/>
            <person name="Dugan-Rocha S."/>
            <person name="Gill R."/>
            <person name="Gunaratne P."/>
            <person name="Harris R.A."/>
            <person name="Hawes A.C."/>
            <person name="Hernandez J."/>
            <person name="Hodgson A.V."/>
            <person name="Hume J."/>
            <person name="Jackson A."/>
            <person name="Khan Z.M."/>
            <person name="Kovar-Smith C."/>
            <person name="Lewis L.R."/>
            <person name="Lozado R.J."/>
            <person name="Metzker M.L."/>
            <person name="Milosavljevic A."/>
            <person name="Miner G.R."/>
            <person name="Morgan M.B."/>
            <person name="Nazareth L.V."/>
            <person name="Scott G."/>
            <person name="Sodergren E."/>
            <person name="Song X.-Z."/>
            <person name="Steffen D."/>
            <person name="Wei S."/>
            <person name="Wheeler D.A."/>
            <person name="Wright M.W."/>
            <person name="Worley K.C."/>
            <person name="Yuan Y."/>
            <person name="Zhang Z."/>
            <person name="Adams C.Q."/>
            <person name="Ansari-Lari M.A."/>
            <person name="Ayele M."/>
            <person name="Brown M.J."/>
            <person name="Chen G."/>
            <person name="Chen Z."/>
            <person name="Clendenning J."/>
            <person name="Clerc-Blankenburg K.P."/>
            <person name="Chen R."/>
            <person name="Chen Z."/>
            <person name="Davis C."/>
            <person name="Delgado O."/>
            <person name="Dinh H.H."/>
            <person name="Dong W."/>
            <person name="Draper H."/>
            <person name="Ernst S."/>
            <person name="Fu G."/>
            <person name="Gonzalez-Garay M.L."/>
            <person name="Garcia D.K."/>
            <person name="Gillett W."/>
            <person name="Gu J."/>
            <person name="Hao B."/>
            <person name="Haugen E."/>
            <person name="Havlak P."/>
            <person name="He X."/>
            <person name="Hennig S."/>
            <person name="Hu S."/>
            <person name="Huang W."/>
            <person name="Jackson L.R."/>
            <person name="Jacob L.S."/>
            <person name="Kelly S.H."/>
            <person name="Kube M."/>
            <person name="Levy R."/>
            <person name="Li Z."/>
            <person name="Liu B."/>
            <person name="Liu J."/>
            <person name="Liu W."/>
            <person name="Lu J."/>
            <person name="Maheshwari M."/>
            <person name="Nguyen B.-V."/>
            <person name="Okwuonu G.O."/>
            <person name="Palmeiri A."/>
            <person name="Pasternak S."/>
            <person name="Perez L.M."/>
            <person name="Phelps K.A."/>
            <person name="Plopper F.J."/>
            <person name="Qiang B."/>
            <person name="Raymond C."/>
            <person name="Rodriguez R."/>
            <person name="Saenphimmachak C."/>
            <person name="Santibanez J."/>
            <person name="Shen H."/>
            <person name="Shen Y."/>
            <person name="Subramanian S."/>
            <person name="Tabor P.E."/>
            <person name="Verduzco D."/>
            <person name="Waldron L."/>
            <person name="Wang J."/>
            <person name="Wang J."/>
            <person name="Wang Q."/>
            <person name="Williams G.A."/>
            <person name="Wong G.K.-S."/>
            <person name="Yao Z."/>
            <person name="Zhang J."/>
            <person name="Zhang X."/>
            <person name="Zhao G."/>
            <person name="Zhou J."/>
            <person name="Zhou Y."/>
            <person name="Nelson D."/>
            <person name="Lehrach H."/>
            <person name="Reinhardt R."/>
            <person name="Naylor S.L."/>
            <person name="Yang H."/>
            <person name="Olson M."/>
            <person name="Weinstock G."/>
            <person name="Gibbs R.A."/>
        </authorList>
    </citation>
    <scope>NUCLEOTIDE SEQUENCE [LARGE SCALE GENOMIC DNA]</scope>
</reference>
<reference key="5">
    <citation type="submission" date="2005-07" db="EMBL/GenBank/DDBJ databases">
        <authorList>
            <person name="Mural R.J."/>
            <person name="Istrail S."/>
            <person name="Sutton G."/>
            <person name="Florea L."/>
            <person name="Halpern A.L."/>
            <person name="Mobarry C.M."/>
            <person name="Lippert R."/>
            <person name="Walenz B."/>
            <person name="Shatkay H."/>
            <person name="Dew I."/>
            <person name="Miller J.R."/>
            <person name="Flanigan M.J."/>
            <person name="Edwards N.J."/>
            <person name="Bolanos R."/>
            <person name="Fasulo D."/>
            <person name="Halldorsson B.V."/>
            <person name="Hannenhalli S."/>
            <person name="Turner R."/>
            <person name="Yooseph S."/>
            <person name="Lu F."/>
            <person name="Nusskern D.R."/>
            <person name="Shue B.C."/>
            <person name="Zheng X.H."/>
            <person name="Zhong F."/>
            <person name="Delcher A.L."/>
            <person name="Huson D.H."/>
            <person name="Kravitz S.A."/>
            <person name="Mouchard L."/>
            <person name="Reinert K."/>
            <person name="Remington K.A."/>
            <person name="Clark A.G."/>
            <person name="Waterman M.S."/>
            <person name="Eichler E.E."/>
            <person name="Adams M.D."/>
            <person name="Hunkapiller M.W."/>
            <person name="Myers E.W."/>
            <person name="Venter J.C."/>
        </authorList>
    </citation>
    <scope>NUCLEOTIDE SEQUENCE [LARGE SCALE GENOMIC DNA]</scope>
</reference>
<reference key="6">
    <citation type="journal article" date="2004" name="Genome Res.">
        <title>The status, quality, and expansion of the NIH full-length cDNA project: the Mammalian Gene Collection (MGC).</title>
        <authorList>
            <consortium name="The MGC Project Team"/>
        </authorList>
    </citation>
    <scope>NUCLEOTIDE SEQUENCE [LARGE SCALE MRNA] (ISOFORM 5)</scope>
    <source>
        <tissue>Lung</tissue>
    </source>
</reference>
<reference key="7">
    <citation type="journal article" date="2007" name="Nature">
        <title>Genome-wide analysis of genetic alterations in acute lymphoblastic leukaemia.</title>
        <authorList>
            <person name="Mullighan C.G."/>
            <person name="Goorha S."/>
            <person name="Radtke I."/>
            <person name="Miller C.B."/>
            <person name="Coustan-Smith E."/>
            <person name="Dalton J.D."/>
            <person name="Girtman K."/>
            <person name="Mathew S."/>
            <person name="Ma J."/>
            <person name="Pounds S.B."/>
            <person name="Su X."/>
            <person name="Pui C.-H."/>
            <person name="Relling M.V."/>
            <person name="Evans W.E."/>
            <person name="Shurtleff S.A."/>
            <person name="Downing J.R."/>
        </authorList>
    </citation>
    <scope>NUCLEOTIDE SEQUENCE [MRNA] OF 60-677</scope>
    <scope>CHROMOSOMAL TRANSLOCATION WITH PAX5</scope>
</reference>
<reference key="8">
    <citation type="journal article" date="2000" name="Genome Res.">
        <title>Cloning and functional analysis of cDNAs with open reading frames for 300 previously undefined genes expressed in CD34+ hematopoietic stem/progenitor cells.</title>
        <authorList>
            <person name="Zhang Q.-H."/>
            <person name="Ye M."/>
            <person name="Wu X.-Y."/>
            <person name="Ren S.-X."/>
            <person name="Zhao M."/>
            <person name="Zhao C.-J."/>
            <person name="Fu G."/>
            <person name="Shen Y."/>
            <person name="Fan H.-Y."/>
            <person name="Lu G."/>
            <person name="Zhong M."/>
            <person name="Xu X.-R."/>
            <person name="Han Z.-G."/>
            <person name="Zhang J.-W."/>
            <person name="Tao J."/>
            <person name="Huang Q.-H."/>
            <person name="Zhou J."/>
            <person name="Hu G.-X."/>
            <person name="Gu J."/>
            <person name="Chen S.-J."/>
            <person name="Chen Z."/>
        </authorList>
    </citation>
    <scope>NUCLEOTIDE SEQUENCE [LARGE SCALE MRNA] OF 528-677</scope>
    <source>
        <tissue>Umbilical cord blood</tissue>
    </source>
</reference>
<reference key="9">
    <citation type="journal article" date="2004" name="J. Clin. Invest.">
        <title>Integrin engagement regulates monocyte differentiation through the forkhead transcription factor Foxp1.</title>
        <authorList>
            <person name="Shi C."/>
            <person name="Zhang X."/>
            <person name="Chen Z."/>
            <person name="Sulaiman K."/>
            <person name="Feinberg M.W."/>
            <person name="Ballantyne C.M."/>
            <person name="Jain M.K."/>
            <person name="Simon D.I."/>
        </authorList>
    </citation>
    <scope>FUNCTION</scope>
</reference>
<reference key="10">
    <citation type="journal article" date="2008" name="Biochem. Biophys. Res. Commun.">
        <title>FOXP1 is an androgen-responsive transcription factor that negatively regulates androgen receptor signaling in prostate cancer cells.</title>
        <authorList>
            <person name="Takayama K."/>
            <person name="Horie-Inoue K."/>
            <person name="Ikeda K."/>
            <person name="Urano T."/>
            <person name="Murakami K."/>
            <person name="Hayashizaki Y."/>
            <person name="Ouchi Y."/>
            <person name="Inoue S."/>
        </authorList>
    </citation>
    <scope>FUNCTION</scope>
    <scope>INTERACTION WITH AR</scope>
    <scope>INDUCTION BY ANDROGEN</scope>
</reference>
<reference key="11">
    <citation type="journal article" date="2008" name="Blood">
        <title>Down-regulation of the forkhead transcription factor Foxp1 is required for monocyte differentiation and macrophage function.</title>
        <authorList>
            <person name="Shi C."/>
            <person name="Sakuma M."/>
            <person name="Mooroka T."/>
            <person name="Liscoe A."/>
            <person name="Gao H."/>
            <person name="Croce K.J."/>
            <person name="Sharma A."/>
            <person name="Kaplan D."/>
            <person name="Greaves D.R."/>
            <person name="Wang Y."/>
            <person name="Simon D.I."/>
        </authorList>
    </citation>
    <scope>FUNCTION</scope>
</reference>
<reference key="12">
    <citation type="journal article" date="2008" name="Genes Dev.">
        <title>Cooperative regulation in development by SMRT and FOXP1.</title>
        <authorList>
            <person name="Jepsen K."/>
            <person name="Gleiberman A.S."/>
            <person name="Shi C."/>
            <person name="Simon D.I."/>
            <person name="Rosenfeld M.G."/>
        </authorList>
    </citation>
    <scope>FUNCTION</scope>
    <scope>INTERACTION WITH NCOR2</scope>
</reference>
<reference key="13">
    <citation type="journal article" date="2008" name="J. Proteome Res.">
        <title>Combining protein-based IMAC, peptide-based IMAC, and MudPIT for efficient phosphoproteomic analysis.</title>
        <authorList>
            <person name="Cantin G.T."/>
            <person name="Yi W."/>
            <person name="Lu B."/>
            <person name="Park S.K."/>
            <person name="Xu T."/>
            <person name="Lee J.-D."/>
            <person name="Yates J.R. III"/>
        </authorList>
    </citation>
    <scope>IDENTIFICATION BY MASS SPECTROMETRY [LARGE SCALE ANALYSIS]</scope>
    <source>
        <tissue>Cervix carcinoma</tissue>
    </source>
</reference>
<reference key="14">
    <citation type="journal article" date="2010" name="Am. J. Hum. Genet.">
        <title>De novo mutations in FOXP1 in cases with intellectual disability, autism, and language impairment.</title>
        <authorList>
            <person name="Hamdan F.F."/>
            <person name="Daoud H."/>
            <person name="Rochefort D."/>
            <person name="Piton A."/>
            <person name="Gauthier J."/>
            <person name="Langlois M."/>
            <person name="Foomani G."/>
            <person name="Dobrzeniecka S."/>
            <person name="Krebs M.O."/>
            <person name="Joober R."/>
            <person name="Lafreniere R.G."/>
            <person name="Lacaille J.C."/>
            <person name="Mottron L."/>
            <person name="Drapeau P."/>
            <person name="Beauchamp M.H."/>
            <person name="Phillips M.S."/>
            <person name="Fombonne E."/>
            <person name="Rouleau G.A."/>
            <person name="Michaud J.L."/>
        </authorList>
    </citation>
    <scope>FUNCTION</scope>
    <scope>INVOLVEMENT IN IDDLA</scope>
    <scope>VARIANTS ALA-215; MET-445; SER-570 AND ASN-613</scope>
</reference>
<reference key="15">
    <citation type="journal article" date="2011" name="Cell">
        <title>An alternative splicing switch regulates embryonic stem cell pluripotency and reprogramming.</title>
        <authorList>
            <person name="Gabut M."/>
            <person name="Samavarchi-Tehrani P."/>
            <person name="Wang X."/>
            <person name="Slobodeniuc V."/>
            <person name="O'Hanlon D."/>
            <person name="Sung H.K."/>
            <person name="Alvarez M."/>
            <person name="Talukder S."/>
            <person name="Pan Q."/>
            <person name="Mazzoni E.O."/>
            <person name="Nedelec S."/>
            <person name="Wichterle H."/>
            <person name="Woltjen K."/>
            <person name="Hughes T.R."/>
            <person name="Zandstra P.W."/>
            <person name="Nagy A."/>
            <person name="Wrana J.L."/>
            <person name="Blencowe B.J."/>
        </authorList>
    </citation>
    <scope>ALTERNATIVE SPLICING (ISOFORM 8)</scope>
    <scope>FUNCTION (ISOFORM 8)</scope>
    <scope>TISSUE SPECIFICITY (ISOFORM 8)</scope>
</reference>
<reference key="16">
    <citation type="submission" date="2002-03" db="EMBL/GenBank/DDBJ databases">
        <authorList>
            <consortium name="The Cancer Genome Anatomy Project (CGAP) at the National Cancer Institute"/>
        </authorList>
    </citation>
    <scope>NUCLEOTIDE SEQUENCE [LARGE SCALE MRNA] OF 1-149 (ISOFORM 4)</scope>
    <source>
        <tissue>Kidney</tissue>
    </source>
</reference>
<reference key="17">
    <citation type="journal article" date="2013" name="J. Proteome Res.">
        <title>Toward a comprehensive characterization of a human cancer cell phosphoproteome.</title>
        <authorList>
            <person name="Zhou H."/>
            <person name="Di Palma S."/>
            <person name="Preisinger C."/>
            <person name="Peng M."/>
            <person name="Polat A.N."/>
            <person name="Heck A.J."/>
            <person name="Mohammed S."/>
        </authorList>
    </citation>
    <scope>PHOSPHORYLATION [LARGE SCALE ANALYSIS] AT SER-83</scope>
    <scope>IDENTIFICATION BY MASS SPECTROMETRY [LARGE SCALE ANALYSIS]</scope>
    <source>
        <tissue>Cervix carcinoma</tissue>
        <tissue>Erythroleukemia</tissue>
    </source>
</reference>
<reference key="18">
    <citation type="journal article" date="2013" name="PLoS ONE">
        <title>FoxP1 stimulates angiogenesis by repressing the inhibitory guidance protein semaphorin 5B in endothelial cells.</title>
        <authorList>
            <person name="Grundmann S."/>
            <person name="Lindmayer C."/>
            <person name="Hans F.P."/>
            <person name="Hoefer I."/>
            <person name="Helbing T."/>
            <person name="Pasterkamp G."/>
            <person name="Bode C."/>
            <person name="de Kleijn D."/>
            <person name="Moser M."/>
        </authorList>
    </citation>
    <scope>FUNCTION</scope>
</reference>
<reference key="19">
    <citation type="journal article" date="2014" name="Blood">
        <title>FOXP1 directly represses transcription of pro-apoptotic genes and cooperates with NF-kappaB to promote survival of human B-cells.</title>
        <authorList>
            <person name="van Keimpema M."/>
            <person name="Grueneberg L.J."/>
            <person name="Mokry M."/>
            <person name="van Boxtel R."/>
            <person name="Koster J."/>
            <person name="Coffer P.J."/>
            <person name="Pals S.T."/>
            <person name="Spaargaren M."/>
        </authorList>
    </citation>
    <scope>FUNCTION</scope>
</reference>
<reference key="20">
    <citation type="journal article" date="2014" name="J. Proteomics">
        <title>An enzyme assisted RP-RPLC approach for in-depth analysis of human liver phosphoproteome.</title>
        <authorList>
            <person name="Bian Y."/>
            <person name="Song C."/>
            <person name="Cheng K."/>
            <person name="Dong M."/>
            <person name="Wang F."/>
            <person name="Huang J."/>
            <person name="Sun D."/>
            <person name="Wang L."/>
            <person name="Ye M."/>
            <person name="Zou H."/>
        </authorList>
    </citation>
    <scope>PHOSPHORYLATION [LARGE SCALE ANALYSIS] AT THR-653 AND SER-658</scope>
    <scope>IDENTIFICATION BY MASS SPECTROMETRY [LARGE SCALE ANALYSIS]</scope>
    <source>
        <tissue>Liver</tissue>
    </source>
</reference>
<reference key="21">
    <citation type="journal article" date="2015" name="J. Mol. Neurosci.">
        <title>Transcriptional Regulation by FOXP1, FOXP2, and FOXP4 Dimerization.</title>
        <authorList>
            <person name="Sin C."/>
            <person name="Li H."/>
            <person name="Crawford D.A."/>
        </authorList>
    </citation>
    <scope>INTERACTION WITH FOXP2 AND FOXP4</scope>
    <scope>SUBCELLULAR LOCATION</scope>
</reference>
<reference key="22">
    <citation type="journal article" date="2017" name="Nat. Struct. Mol. Biol.">
        <title>Site-specific mapping of the human SUMO proteome reveals co-modification with phosphorylation.</title>
        <authorList>
            <person name="Hendriks I.A."/>
            <person name="Lyon D."/>
            <person name="Young C."/>
            <person name="Jensen L.J."/>
            <person name="Vertegaal A.C."/>
            <person name="Nielsen M.L."/>
        </authorList>
    </citation>
    <scope>SUMOYLATION [LARGE SCALE ANALYSIS] AT LYS-287; LYS-372; LYS-377 AND LYS-442</scope>
    <scope>IDENTIFICATION BY MASS SPECTROMETRY [LARGE SCALE ANALYSIS]</scope>
</reference>
<reference key="23">
    <citation type="journal article" date="2017" name="Oncogenesis">
        <title>Aurora kinase A regulates Survivin stability through targeting FBXL7 in gastric cancer drug resistance and prognosis.</title>
        <authorList>
            <person name="Kamran M."/>
            <person name="Long Z.J."/>
            <person name="Xu D."/>
            <person name="Lv S.S."/>
            <person name="Liu B."/>
            <person name="Wang C.L."/>
            <person name="Xu J."/>
            <person name="Lam E.W."/>
            <person name="Liu Q."/>
        </authorList>
    </citation>
    <scope>FUNCTION</scope>
    <scope>INTERACTION WITH AURKA</scope>
</reference>
<reference key="24">
    <citation type="journal article" date="2018" name="Sci. Rep.">
        <title>Functional characterization of TBR1 variants in neurodevelopmental disorder.</title>
        <authorList>
            <person name="den Hoed J."/>
            <person name="Sollis E."/>
            <person name="Venselaar H."/>
            <person name="Estruch S.B."/>
            <person name="Deriziotis P."/>
            <person name="Fisher S.E."/>
        </authorList>
    </citation>
    <scope>INTERACTION WITH TBR1</scope>
</reference>
<reference key="25">
    <citation type="journal article" date="2020" name="Am. J. Hum. Genet.">
        <title>Mutations of the transcriptional corepressor ZMYM2 cause syndromic urinary tract malformations.</title>
        <authorList>
            <person name="Connaughton D.M."/>
            <person name="Dai R."/>
            <person name="Owen D.J."/>
            <person name="Marquez J."/>
            <person name="Mann N."/>
            <person name="Graham-Paquin A.L."/>
            <person name="Nakayama M."/>
            <person name="Coyaud E."/>
            <person name="Laurent E.M.N."/>
            <person name="St-Germain J.R."/>
            <person name="Blok L.S."/>
            <person name="Vino A."/>
            <person name="Klaembt V."/>
            <person name="Deutsch K."/>
            <person name="Wu C.W."/>
            <person name="Kolvenbach C.M."/>
            <person name="Kause F."/>
            <person name="Ottlewski I."/>
            <person name="Schneider R."/>
            <person name="Kitzler T.M."/>
            <person name="Majmundar A.J."/>
            <person name="Buerger F."/>
            <person name="Onuchic-Whitford A.C."/>
            <person name="Youying M."/>
            <person name="Kolb A."/>
            <person name="Salmanullah D."/>
            <person name="Chen E."/>
            <person name="van der Ven A.T."/>
            <person name="Rao J."/>
            <person name="Ityel H."/>
            <person name="Seltzsam S."/>
            <person name="Rieke J.M."/>
            <person name="Chen J."/>
            <person name="Vivante A."/>
            <person name="Hwang D.Y."/>
            <person name="Kohl S."/>
            <person name="Dworschak G.C."/>
            <person name="Hermle T."/>
            <person name="Alders M."/>
            <person name="Bartolomaeus T."/>
            <person name="Bauer S.B."/>
            <person name="Baum M.A."/>
            <person name="Brilstra E.H."/>
            <person name="Challman T.D."/>
            <person name="Zyskind J."/>
            <person name="Costin C.E."/>
            <person name="Dipple K.M."/>
            <person name="Duijkers F.A."/>
            <person name="Ferguson M."/>
            <person name="Fitzpatrick D.R."/>
            <person name="Fick R."/>
            <person name="Glass I.A."/>
            <person name="Hulick P.J."/>
            <person name="Kline A.D."/>
            <person name="Krey I."/>
            <person name="Kumar S."/>
            <person name="Lu W."/>
            <person name="Marco E.J."/>
            <person name="Wentzensen I.M."/>
            <person name="Mefford H.C."/>
            <person name="Platzer K."/>
            <person name="Povolotskaya I.S."/>
            <person name="Savatt J.M."/>
            <person name="Shcherbakova N.V."/>
            <person name="Senguttuvan P."/>
            <person name="Squire A.E."/>
            <person name="Stein D.R."/>
            <person name="Thiffault I."/>
            <person name="Voinova V.Y."/>
            <person name="Somers M.J.G."/>
            <person name="Ferguson M.A."/>
            <person name="Traum A.Z."/>
            <person name="Daouk G.H."/>
            <person name="Daga A."/>
            <person name="Rodig N.M."/>
            <person name="Terhal P.A."/>
            <person name="van Binsbergen E."/>
            <person name="Eid L.A."/>
            <person name="Tasic V."/>
            <person name="Rasouly H.M."/>
            <person name="Lim T.Y."/>
            <person name="Ahram D.F."/>
            <person name="Gharavi A.G."/>
            <person name="Reutter H.M."/>
            <person name="Rehm H.L."/>
            <person name="MacArthur D.G."/>
            <person name="Lek M."/>
            <person name="Laricchia K.M."/>
            <person name="Lifton R.P."/>
            <person name="Xu H."/>
            <person name="Mane S.M."/>
            <person name="Sanna-Cherchi S."/>
            <person name="Sharrocks A.D."/>
            <person name="Raught B."/>
            <person name="Fisher S.E."/>
            <person name="Bouchard M."/>
            <person name="Khokha M.K."/>
            <person name="Shril S."/>
            <person name="Hildebrandt F."/>
        </authorList>
    </citation>
    <scope>INTERACTION WITH ZMYM2</scope>
</reference>
<reference key="26">
    <citation type="journal article" date="2011" name="Protein Sci.">
        <title>Solution structure and backbone dynamics of the DNA-binding domain of FOXP1: insight into its domain swapping and DNA binding.</title>
        <authorList>
            <person name="Chu Y.P."/>
            <person name="Chang C.H."/>
            <person name="Shiu J.H."/>
            <person name="Chang Y.T."/>
            <person name="Chen C.Y."/>
            <person name="Chuang W.J."/>
        </authorList>
    </citation>
    <scope>STRUCTURE BY NMR OF 462-548</scope>
</reference>
<reference key="27">
    <citation type="journal article" date="2009" name="Eur. J. Hum. Genet.">
        <title>Assessing the impact of FOXP1 mutations on developmental verbal dyspraxia.</title>
        <authorList>
            <person name="Vernes S.C."/>
            <person name="MacDermot K.D."/>
            <person name="Monaco A.P."/>
            <person name="Fisher S.E."/>
        </authorList>
    </citation>
    <scope>VARIANT ALA-215</scope>
</reference>
<reference key="28">
    <citation type="journal article" date="2010" name="Hum. Mutat.">
        <title>Identification of FOXP1 deletions in three unrelated patients with mental retardation and significant speech and language deficits.</title>
        <authorList>
            <person name="Horn D."/>
            <person name="Kapeller J."/>
            <person name="Rivera-Brugues N."/>
            <person name="Moog U."/>
            <person name="Lorenz-Depiereux B."/>
            <person name="Eck S."/>
            <person name="Hempel M."/>
            <person name="Wagenstaller J."/>
            <person name="Gawthrope A."/>
            <person name="Monaco A.P."/>
            <person name="Bonin M."/>
            <person name="Riess O."/>
            <person name="Wohlleber E."/>
            <person name="Illig T."/>
            <person name="Bezzina C.R."/>
            <person name="Franke A."/>
            <person name="Spranger S."/>
            <person name="Villavicencio-Lorini P."/>
            <person name="Seifert W."/>
            <person name="Rosenfeld J."/>
            <person name="Klopocki E."/>
            <person name="Rappold G.A."/>
            <person name="Strom T.M."/>
        </authorList>
    </citation>
    <scope>VARIANTS PRO-5; VAL-101; ALA-215; PRO-261; SER-390 AND SER-570</scope>
    <scope>VARIANT IDDLA THR-597</scope>
</reference>
<reference key="29">
    <citation type="journal article" date="2016" name="Hum. Mol. Genet.">
        <title>Identification and functional characterization of de novo FOXP1 variants provides novel insights into the etiology of neurodevelopmental disorder.</title>
        <authorList>
            <person name="Sollis E."/>
            <person name="Graham S.A."/>
            <person name="Vino A."/>
            <person name="Froehlich H."/>
            <person name="Vreeburg M."/>
            <person name="Dimitropoulou D."/>
            <person name="Gilissen C."/>
            <person name="Pfundt R."/>
            <person name="Rappold G.A."/>
            <person name="Brunner H.G."/>
            <person name="Deriziotis P."/>
            <person name="Fisher S.E."/>
        </authorList>
    </citation>
    <scope>VARIANTS IDDLA THR-107; GLY-465; CYS-514; ARG-534 AND THR-597</scope>
    <scope>VARIANTS ALA-215 AND SER-570</scope>
    <scope>CHARACTERIZATION OF VARIANTS IDDLA THR-107; GLY-465; CYS-514; ARG-534 AND THR-597</scope>
    <scope>CHARACTERIZATION OF VARIANTS ALA-215 AND SER-570</scope>
    <scope>FUNCTION</scope>
    <scope>SELF-ASSOCIATION</scope>
    <scope>SUBCELLULAR LOCATION</scope>
    <scope>INTERACTION WITH FOXP2</scope>
</reference>
<reference key="30">
    <citation type="journal article" date="2019" name="Mol. Psychiatry">
        <title>A set of regulatory genes co-expressed in embryonic human brain is implicated in disrupted speech development.</title>
        <authorList>
            <person name="Eising E."/>
            <person name="Carrion-Castillo A."/>
            <person name="Vino A."/>
            <person name="Strand E.A."/>
            <person name="Jakielski K.J."/>
            <person name="Scerri T.S."/>
            <person name="Hildebrand M.S."/>
            <person name="Webster R."/>
            <person name="Ma A."/>
            <person name="Mazoyer B."/>
            <person name="Francks C."/>
            <person name="Bahlo M."/>
            <person name="Scheffer I.E."/>
            <person name="Morgan A.T."/>
            <person name="Shriberg L.D."/>
            <person name="Fisher S.E."/>
        </authorList>
    </citation>
    <scope>VARIANT IDDLA THR-107</scope>
</reference>
<accession>Q9H334</accession>
<accession>A3QVP8</accession>
<accession>B3KV70</accession>
<accession>G5E9V8</accession>
<accession>Q8NAN6</accession>
<accession>Q9BSG9</accession>
<accession>Q9H332</accession>
<accession>Q9H333</accession>
<accession>Q9P0R1</accession>
<feature type="chain" id="PRO_0000091877" description="Forkhead box protein P1">
    <location>
        <begin position="1"/>
        <end position="677"/>
    </location>
</feature>
<feature type="zinc finger region" description="C2H2-type">
    <location>
        <begin position="306"/>
        <end position="331"/>
    </location>
</feature>
<feature type="DNA-binding region" description="Fork-head" evidence="3">
    <location>
        <begin position="465"/>
        <end position="555"/>
    </location>
</feature>
<feature type="region of interest" description="Disordered" evidence="4">
    <location>
        <begin position="1"/>
        <end position="43"/>
    </location>
</feature>
<feature type="region of interest" description="Disordered" evidence="4">
    <location>
        <begin position="270"/>
        <end position="298"/>
    </location>
</feature>
<feature type="region of interest" description="Leucine-zipper">
    <location>
        <begin position="348"/>
        <end position="369"/>
    </location>
</feature>
<feature type="region of interest" description="CTBP1-binding" evidence="1">
    <location>
        <begin position="382"/>
        <end position="386"/>
    </location>
</feature>
<feature type="region of interest" description="Disordered" evidence="4">
    <location>
        <begin position="390"/>
        <end position="422"/>
    </location>
</feature>
<feature type="region of interest" description="Disordered" evidence="4">
    <location>
        <begin position="611"/>
        <end position="677"/>
    </location>
</feature>
<feature type="compositionally biased region" description="Polar residues" evidence="4">
    <location>
        <begin position="1"/>
        <end position="18"/>
    </location>
</feature>
<feature type="compositionally biased region" description="Polar residues" evidence="4">
    <location>
        <begin position="270"/>
        <end position="283"/>
    </location>
</feature>
<feature type="compositionally biased region" description="Basic and acidic residues" evidence="4">
    <location>
        <begin position="286"/>
        <end position="298"/>
    </location>
</feature>
<feature type="compositionally biased region" description="Polar residues" evidence="4">
    <location>
        <begin position="390"/>
        <end position="403"/>
    </location>
</feature>
<feature type="compositionally biased region" description="Low complexity" evidence="4">
    <location>
        <begin position="404"/>
        <end position="418"/>
    </location>
</feature>
<feature type="compositionally biased region" description="Polar residues" evidence="4">
    <location>
        <begin position="612"/>
        <end position="623"/>
    </location>
</feature>
<feature type="compositionally biased region" description="Acidic residues" evidence="4">
    <location>
        <begin position="667"/>
        <end position="677"/>
    </location>
</feature>
<feature type="site" description="Breakpoint for translocation to form PAX5-FOXP1">
    <location>
        <begin position="59"/>
        <end position="60"/>
    </location>
</feature>
<feature type="modified residue" description="Phosphoserine" evidence="29">
    <location>
        <position position="83"/>
    </location>
</feature>
<feature type="modified residue" description="Phosphothreonine" evidence="30">
    <location>
        <position position="653"/>
    </location>
</feature>
<feature type="modified residue" description="Phosphoserine" evidence="30">
    <location>
        <position position="658"/>
    </location>
</feature>
<feature type="cross-link" description="Glycyl lysine isopeptide (Lys-Gly) (interchain with G-Cter in SUMO2)" evidence="31">
    <location>
        <position position="287"/>
    </location>
</feature>
<feature type="cross-link" description="Glycyl lysine isopeptide (Lys-Gly) (interchain with G-Cter in SUMO2)" evidence="31">
    <location>
        <position position="372"/>
    </location>
</feature>
<feature type="cross-link" description="Glycyl lysine isopeptide (Lys-Gly) (interchain with G-Cter in SUMO2)" evidence="31">
    <location>
        <position position="377"/>
    </location>
</feature>
<feature type="cross-link" description="Glycyl lysine isopeptide (Lys-Gly) (interchain with G-Cter in SUMO2)" evidence="31">
    <location>
        <position position="442"/>
    </location>
</feature>
<feature type="splice variant" id="VSP_001555" description="In isoform 3 and isoform 4." evidence="22">
    <original>MMQESGTETKSNGSAIQNGSGGSNHLLECGGLREGRSNGETPAVDIGAADLAHAQQQQQQ</original>
    <variation>MFQCVFSSSVLQPHSTSCLFKHLFYHSATPASQKQPEPIYSKKTEIQRQTVRAPFAKLFIFS</variation>
    <location>
        <begin position="1"/>
        <end position="60"/>
    </location>
</feature>
<feature type="splice variant" id="VSP_043462" description="In isoform 5." evidence="24 25">
    <original>ALQVARQLLLQQQQQQQVSGLKSPKRNDKQPALQVPVSVAMMTPQVITPQQMQQ</original>
    <variation>WHLINHQPSRSPSSWLKRLISSPWELEVLQVPLWGAVAETKMSGPVCQPNPSPF</variation>
    <location>
        <begin position="61"/>
        <end position="114"/>
    </location>
</feature>
<feature type="splice variant" id="VSP_001556" description="In isoform 3 and isoform 6." evidence="22">
    <location>
        <begin position="95"/>
        <end position="170"/>
    </location>
</feature>
<feature type="splice variant" id="VSP_043463" description="In isoform 5." evidence="24 25">
    <location>
        <begin position="115"/>
        <end position="677"/>
    </location>
</feature>
<feature type="splice variant" id="VSP_046930" description="In isoform 7." evidence="21 22">
    <location>
        <position position="450"/>
    </location>
</feature>
<feature type="splice variant" id="VSP_057341" description="In isoform 8." evidence="12">
    <original>NAVRHNLSLHKCFVRVENVKGAVWTVDEVEFQKRRPQKISG</original>
    <variation>GAIRTNLSLHKCFIRVEDEFGSFWTVDDEEFKRGRHIQRGRPRKYCPDENFDELVAH</variation>
    <location>
        <begin position="511"/>
        <end position="551"/>
    </location>
</feature>
<feature type="sequence variant" id="VAR_065067" description="In dbSNP:rs762898505." evidence="10">
    <original>S</original>
    <variation>P</variation>
    <location>
        <position position="5"/>
    </location>
</feature>
<feature type="sequence variant" id="VAR_065068" description="In dbSNP:rs564508875." evidence="10">
    <original>M</original>
    <variation>V</variation>
    <location>
        <position position="101"/>
    </location>
</feature>
<feature type="sequence variant" id="VAR_075246" description="In IDDLA; uncertain significance; does not affect nuclear localization; no loss of transcriptional repression activity; no loss of ability to self-associate; no loss of interaction with FOXP2." evidence="16 18">
    <original>I</original>
    <variation>T</variation>
    <location>
        <position position="107"/>
    </location>
</feature>
<feature type="sequence variant" id="VAR_065069" description="Does not affect nuclear localization; no loss of transcriptional repression activity; no loss of ability to self-associate; no loss of interaction with FOXP2; dbSNP:rs146606219." evidence="9 10 11 16">
    <original>P</original>
    <variation>A</variation>
    <location>
        <position position="215"/>
    </location>
</feature>
<feature type="sequence variant" id="VAR_065070" evidence="10">
    <original>S</original>
    <variation>P</variation>
    <location>
        <position position="261"/>
    </location>
</feature>
<feature type="sequence variant" id="VAR_065071" description="In dbSNP:rs761840006." evidence="10">
    <original>T</original>
    <variation>S</variation>
    <location>
        <position position="390"/>
    </location>
</feature>
<feature type="sequence variant" id="VAR_065072" description="In dbSNP:rs147756430." evidence="11">
    <original>V</original>
    <variation>M</variation>
    <location>
        <position position="445"/>
    </location>
</feature>
<feature type="sequence variant" id="VAR_075247" description="In IDDLA; nuclear and cytoplasmic aggregation; loss of transcriptional repression activity; loss of ability to self-associate; loss of interaction with FOXP2; dbSNP:rs869025202." evidence="16">
    <original>R</original>
    <variation>G</variation>
    <location>
        <position position="465"/>
    </location>
</feature>
<feature type="sequence variant" id="VAR_075248" description="In IDDLA; nuclear and cytoplasmic aggregation; loss of transcriptional repression activity; loss of ability to self-associate; loss of interaction with FOXP2; dbSNP:rs869025203." evidence="16">
    <original>R</original>
    <variation>C</variation>
    <location>
        <position position="514"/>
    </location>
</feature>
<feature type="sequence variant" id="VAR_075249" description="In IDDLA; nuclear and cytoplasmic aggregation; loss of transcriptional repression activity; loss of ability to self-associate; loss of interaction with FOXP2; dbSNP:rs587777855." evidence="16">
    <original>W</original>
    <variation>R</variation>
    <location>
        <position position="534"/>
    </location>
</feature>
<feature type="sequence variant" id="VAR_065073" description="Does not affect nuclear localization; no loss of transcriptional repression activity; no loss of ability to self-associate; no loss of interaction with FOXP2; dbSNP:rs140161845." evidence="10 11 16">
    <original>N</original>
    <variation>S</variation>
    <location>
        <position position="570"/>
    </location>
</feature>
<feature type="sequence variant" id="VAR_065074" description="In IDDLA; uncertain significance; does not affect nuclear localization; no loss of transcriptional repression activity; no loss of ability to self-associate; no loss of interaction with FOXP2." evidence="10 16">
    <original>N</original>
    <variation>T</variation>
    <location>
        <position position="597"/>
    </location>
</feature>
<feature type="sequence variant" id="VAR_065075" description="In dbSNP:rs1318614471." evidence="11">
    <original>T</original>
    <variation>N</variation>
    <location>
        <position position="613"/>
    </location>
</feature>
<feature type="sequence conflict" description="In Ref. 3; BAG53682." evidence="26" ref="3">
    <original>L</original>
    <variation>P</variation>
    <location>
        <position position="138"/>
    </location>
</feature>
<feature type="sequence conflict" description="In Ref. 3; BAB55005." evidence="26" ref="3">
    <original>Q</original>
    <variation>R</variation>
    <location>
        <position position="173"/>
    </location>
</feature>
<feature type="sequence conflict" description="In Ref. 3; BAB55005." evidence="26" ref="3">
    <original>L</original>
    <variation>V</variation>
    <location>
        <position position="205"/>
    </location>
</feature>
<feature type="sequence conflict" description="In Ref. 1; AAK69408." evidence="26" ref="1">
    <original>GQP</original>
    <variation>ARA</variation>
    <location>
        <begin position="210"/>
        <end position="212"/>
    </location>
</feature>
<feature type="helix" evidence="32">
    <location>
        <begin position="470"/>
        <end position="479"/>
    </location>
</feature>
<feature type="strand" evidence="32">
    <location>
        <begin position="481"/>
        <end position="486"/>
    </location>
</feature>
<feature type="helix" evidence="32">
    <location>
        <begin position="488"/>
        <end position="498"/>
    </location>
</feature>
<feature type="helix" evidence="32">
    <location>
        <begin position="500"/>
        <end position="502"/>
    </location>
</feature>
<feature type="helix" evidence="32">
    <location>
        <begin position="506"/>
        <end position="519"/>
    </location>
</feature>
<feature type="strand" evidence="32">
    <location>
        <begin position="523"/>
        <end position="526"/>
    </location>
</feature>
<feature type="strand" evidence="32">
    <location>
        <begin position="533"/>
        <end position="536"/>
    </location>
</feature>
<feature type="helix" evidence="32">
    <location>
        <begin position="538"/>
        <end position="543"/>
    </location>
</feature>
<evidence type="ECO:0000250" key="1"/>
<evidence type="ECO:0000250" key="2">
    <source>
        <dbReference type="UniProtKB" id="P58462"/>
    </source>
</evidence>
<evidence type="ECO:0000255" key="3">
    <source>
        <dbReference type="PROSITE-ProRule" id="PRU00089"/>
    </source>
</evidence>
<evidence type="ECO:0000256" key="4">
    <source>
        <dbReference type="SAM" id="MobiDB-lite"/>
    </source>
</evidence>
<evidence type="ECO:0000269" key="5">
    <source>
    </source>
</evidence>
<evidence type="ECO:0000269" key="6">
    <source>
    </source>
</evidence>
<evidence type="ECO:0000269" key="7">
    <source>
    </source>
</evidence>
<evidence type="ECO:0000269" key="8">
    <source>
    </source>
</evidence>
<evidence type="ECO:0000269" key="9">
    <source>
    </source>
</evidence>
<evidence type="ECO:0000269" key="10">
    <source>
    </source>
</evidence>
<evidence type="ECO:0000269" key="11">
    <source>
    </source>
</evidence>
<evidence type="ECO:0000269" key="12">
    <source>
    </source>
</evidence>
<evidence type="ECO:0000269" key="13">
    <source>
    </source>
</evidence>
<evidence type="ECO:0000269" key="14">
    <source>
    </source>
</evidence>
<evidence type="ECO:0000269" key="15">
    <source>
    </source>
</evidence>
<evidence type="ECO:0000269" key="16">
    <source>
    </source>
</evidence>
<evidence type="ECO:0000269" key="17">
    <source>
    </source>
</evidence>
<evidence type="ECO:0000269" key="18">
    <source>
    </source>
</evidence>
<evidence type="ECO:0000269" key="19">
    <source>
    </source>
</evidence>
<evidence type="ECO:0000269" key="20">
    <source>
    </source>
</evidence>
<evidence type="ECO:0000303" key="21">
    <source>
    </source>
</evidence>
<evidence type="ECO:0000303" key="22">
    <source>
    </source>
</evidence>
<evidence type="ECO:0000303" key="23">
    <source>
    </source>
</evidence>
<evidence type="ECO:0000303" key="24">
    <source>
    </source>
</evidence>
<evidence type="ECO:0000303" key="25">
    <source ref="2"/>
</evidence>
<evidence type="ECO:0000305" key="26"/>
<evidence type="ECO:0000305" key="27">
    <source>
    </source>
</evidence>
<evidence type="ECO:0000305" key="28">
    <source>
    </source>
</evidence>
<evidence type="ECO:0007744" key="29">
    <source>
    </source>
</evidence>
<evidence type="ECO:0007744" key="30">
    <source>
    </source>
</evidence>
<evidence type="ECO:0007744" key="31">
    <source>
    </source>
</evidence>
<evidence type="ECO:0007829" key="32">
    <source>
        <dbReference type="PDB" id="2KIU"/>
    </source>
</evidence>
<gene>
    <name type="primary">FOXP1</name>
    <name type="ORF">HSPC215</name>
</gene>
<keyword id="KW-0002">3D-structure</keyword>
<keyword id="KW-0025">Alternative splicing</keyword>
<keyword id="KW-0160">Chromosomal rearrangement</keyword>
<keyword id="KW-0225">Disease variant</keyword>
<keyword id="KW-0238">DNA-binding</keyword>
<keyword id="KW-0991">Intellectual disability</keyword>
<keyword id="KW-1017">Isopeptide bond</keyword>
<keyword id="KW-0479">Metal-binding</keyword>
<keyword id="KW-0539">Nucleus</keyword>
<keyword id="KW-0597">Phosphoprotein</keyword>
<keyword id="KW-1267">Proteomics identification</keyword>
<keyword id="KW-1185">Reference proteome</keyword>
<keyword id="KW-0678">Repressor</keyword>
<keyword id="KW-0804">Transcription</keyword>
<keyword id="KW-0805">Transcription regulation</keyword>
<keyword id="KW-0832">Ubl conjugation</keyword>
<keyword id="KW-0862">Zinc</keyword>
<keyword id="KW-0863">Zinc-finger</keyword>
<dbReference type="EMBL" id="AF146696">
    <property type="protein sequence ID" value="AAG47632.1"/>
    <property type="molecule type" value="mRNA"/>
</dbReference>
<dbReference type="EMBL" id="AF146697">
    <property type="protein sequence ID" value="AAG47633.1"/>
    <property type="molecule type" value="mRNA"/>
</dbReference>
<dbReference type="EMBL" id="AF146698">
    <property type="protein sequence ID" value="AAG47634.1"/>
    <property type="status" value="ALT_SEQ"/>
    <property type="molecule type" value="mRNA"/>
</dbReference>
<dbReference type="EMBL" id="AF275309">
    <property type="protein sequence ID" value="AAK69408.1"/>
    <property type="molecule type" value="mRNA"/>
</dbReference>
<dbReference type="EMBL" id="BT006643">
    <property type="protein sequence ID" value="AAP35289.1"/>
    <property type="molecule type" value="mRNA"/>
</dbReference>
<dbReference type="EMBL" id="AK092383">
    <property type="protein sequence ID" value="BAC03875.1"/>
    <property type="molecule type" value="mRNA"/>
</dbReference>
<dbReference type="EMBL" id="AK122710">
    <property type="protein sequence ID" value="BAG53682.1"/>
    <property type="molecule type" value="mRNA"/>
</dbReference>
<dbReference type="EMBL" id="AC097632">
    <property type="status" value="NOT_ANNOTATED_CDS"/>
    <property type="molecule type" value="Genomic_DNA"/>
</dbReference>
<dbReference type="EMBL" id="AC097634">
    <property type="status" value="NOT_ANNOTATED_CDS"/>
    <property type="molecule type" value="Genomic_DNA"/>
</dbReference>
<dbReference type="EMBL" id="AC103586">
    <property type="status" value="NOT_ANNOTATED_CDS"/>
    <property type="molecule type" value="Genomic_DNA"/>
</dbReference>
<dbReference type="EMBL" id="AC104442">
    <property type="status" value="NOT_ANNOTATED_CDS"/>
    <property type="molecule type" value="Genomic_DNA"/>
</dbReference>
<dbReference type="EMBL" id="AC104645">
    <property type="status" value="NOT_ANNOTATED_CDS"/>
    <property type="molecule type" value="Genomic_DNA"/>
</dbReference>
<dbReference type="EMBL" id="AC138058">
    <property type="status" value="NOT_ANNOTATED_CDS"/>
    <property type="molecule type" value="Genomic_DNA"/>
</dbReference>
<dbReference type="EMBL" id="CH471055">
    <property type="protein sequence ID" value="EAW65494.1"/>
    <property type="molecule type" value="Genomic_DNA"/>
</dbReference>
<dbReference type="EMBL" id="CH471055">
    <property type="protein sequence ID" value="EAW65499.1"/>
    <property type="molecule type" value="Genomic_DNA"/>
</dbReference>
<dbReference type="EMBL" id="BC005055">
    <property type="protein sequence ID" value="AAH05055.1"/>
    <property type="molecule type" value="mRNA"/>
</dbReference>
<dbReference type="EMBL" id="BC054815">
    <property type="protein sequence ID" value="AAH54815.1"/>
    <property type="molecule type" value="mRNA"/>
</dbReference>
<dbReference type="EMBL" id="BC071893">
    <property type="protein sequence ID" value="AAH71893.1"/>
    <property type="molecule type" value="mRNA"/>
</dbReference>
<dbReference type="EMBL" id="BC080521">
    <property type="protein sequence ID" value="AAH80521.1"/>
    <property type="molecule type" value="mRNA"/>
</dbReference>
<dbReference type="EMBL" id="DQ845346">
    <property type="protein sequence ID" value="ABI33105.1"/>
    <property type="status" value="ALT_INIT"/>
    <property type="molecule type" value="mRNA"/>
</dbReference>
<dbReference type="EMBL" id="AK027264">
    <property type="protein sequence ID" value="BAB55005.1"/>
    <property type="status" value="ALT_INIT"/>
    <property type="molecule type" value="mRNA"/>
</dbReference>
<dbReference type="EMBL" id="AF151049">
    <property type="protein sequence ID" value="AAF36135.1"/>
    <property type="status" value="ALT_FRAME"/>
    <property type="molecule type" value="mRNA"/>
</dbReference>
<dbReference type="EMBL" id="BQ017072">
    <property type="status" value="NOT_ANNOTATED_CDS"/>
    <property type="molecule type" value="mRNA"/>
</dbReference>
<dbReference type="CCDS" id="CCDS2914.1">
    <molecule id="Q9H334-1"/>
</dbReference>
<dbReference type="CCDS" id="CCDS33785.1">
    <molecule id="Q9H334-5"/>
</dbReference>
<dbReference type="CCDS" id="CCDS58838.1">
    <molecule id="Q9H334-6"/>
</dbReference>
<dbReference type="CCDS" id="CCDS58839.1">
    <molecule id="Q9H334-7"/>
</dbReference>
<dbReference type="CCDS" id="CCDS74964.1">
    <molecule id="Q9H334-8"/>
</dbReference>
<dbReference type="RefSeq" id="NP_001012523.1">
    <molecule id="Q9H334-5"/>
    <property type="nucleotide sequence ID" value="NM_001012505.2"/>
</dbReference>
<dbReference type="RefSeq" id="NP_001231737.1">
    <molecule id="Q9H334-7"/>
    <property type="nucleotide sequence ID" value="NM_001244808.3"/>
</dbReference>
<dbReference type="RefSeq" id="NP_001231739.1">
    <molecule id="Q9H334-8"/>
    <property type="nucleotide sequence ID" value="NM_001244810.2"/>
</dbReference>
<dbReference type="RefSeq" id="NP_001231741.1">
    <molecule id="Q9H334-6"/>
    <property type="nucleotide sequence ID" value="NM_001244812.3"/>
</dbReference>
<dbReference type="RefSeq" id="NP_001231743.1">
    <molecule id="Q9H334-1"/>
    <property type="nucleotide sequence ID" value="NM_001244814.3"/>
</dbReference>
<dbReference type="RefSeq" id="NP_001231744.1">
    <property type="nucleotide sequence ID" value="NM_001244815.1"/>
</dbReference>
<dbReference type="RefSeq" id="NP_001231745.1">
    <molecule id="Q9H334-1"/>
    <property type="nucleotide sequence ID" value="NM_001244816.2"/>
</dbReference>
<dbReference type="RefSeq" id="NP_001336267.1">
    <molecule id="Q9H334-1"/>
    <property type="nucleotide sequence ID" value="NM_001349338.3"/>
</dbReference>
<dbReference type="RefSeq" id="NP_001336269.1">
    <molecule id="Q9H334-1"/>
    <property type="nucleotide sequence ID" value="NM_001349340.3"/>
</dbReference>
<dbReference type="RefSeq" id="NP_116071.2">
    <molecule id="Q9H334-1"/>
    <property type="nucleotide sequence ID" value="NM_032682.5"/>
</dbReference>
<dbReference type="RefSeq" id="XP_006713165.1">
    <property type="nucleotide sequence ID" value="XM_006713102.2"/>
</dbReference>
<dbReference type="RefSeq" id="XP_006713166.1">
    <property type="nucleotide sequence ID" value="XM_006713103.2"/>
</dbReference>
<dbReference type="RefSeq" id="XP_006713167.1">
    <property type="nucleotide sequence ID" value="XM_006713104.2"/>
</dbReference>
<dbReference type="RefSeq" id="XP_011531886.1">
    <property type="nucleotide sequence ID" value="XM_011533584.2"/>
</dbReference>
<dbReference type="RefSeq" id="XP_011531887.1">
    <property type="nucleotide sequence ID" value="XM_011533585.2"/>
</dbReference>
<dbReference type="RefSeq" id="XP_016861654.1">
    <property type="nucleotide sequence ID" value="XM_017006165.1"/>
</dbReference>
<dbReference type="RefSeq" id="XP_016861655.1">
    <property type="nucleotide sequence ID" value="XM_017006166.1"/>
</dbReference>
<dbReference type="RefSeq" id="XP_016861657.1">
    <property type="nucleotide sequence ID" value="XM_017006168.1"/>
</dbReference>
<dbReference type="PDB" id="2KIU">
    <property type="method" value="NMR"/>
    <property type="chains" value="A=462-548"/>
</dbReference>
<dbReference type="PDBsum" id="2KIU"/>
<dbReference type="SMR" id="Q9H334"/>
<dbReference type="BioGRID" id="117989">
    <property type="interactions" value="250"/>
</dbReference>
<dbReference type="ComplexPortal" id="CPX-8774">
    <property type="entry name" value="FOXP1 transcription factor homodimer"/>
</dbReference>
<dbReference type="ComplexPortal" id="CPX-8802">
    <property type="entry name" value="FOXP1-FOXP2 transcription factor complex"/>
</dbReference>
<dbReference type="ComplexPortal" id="CPX-8804">
    <property type="entry name" value="FOXP1-FOXP4 transcription factor complex"/>
</dbReference>
<dbReference type="DIP" id="DIP-36585N"/>
<dbReference type="FunCoup" id="Q9H334">
    <property type="interactions" value="2339"/>
</dbReference>
<dbReference type="IntAct" id="Q9H334">
    <property type="interactions" value="92"/>
</dbReference>
<dbReference type="MINT" id="Q9H334"/>
<dbReference type="STRING" id="9606.ENSP00000497585"/>
<dbReference type="GlyCosmos" id="Q9H334">
    <property type="glycosylation" value="9 sites, 2 glycans"/>
</dbReference>
<dbReference type="GlyGen" id="Q9H334">
    <property type="glycosylation" value="10 sites, 2 O-linked glycans (10 sites)"/>
</dbReference>
<dbReference type="iPTMnet" id="Q9H334"/>
<dbReference type="PhosphoSitePlus" id="Q9H334"/>
<dbReference type="BioMuta" id="FOXP1"/>
<dbReference type="DMDM" id="14548062"/>
<dbReference type="jPOST" id="Q9H334"/>
<dbReference type="MassIVE" id="Q9H334"/>
<dbReference type="PaxDb" id="9606-ENSP00000484803"/>
<dbReference type="PeptideAtlas" id="Q9H334"/>
<dbReference type="ProteomicsDB" id="34057"/>
<dbReference type="ProteomicsDB" id="72684"/>
<dbReference type="ProteomicsDB" id="80663">
    <molecule id="Q9H334-1"/>
</dbReference>
<dbReference type="ProteomicsDB" id="80665">
    <molecule id="Q9H334-3"/>
</dbReference>
<dbReference type="ProteomicsDB" id="80666">
    <molecule id="Q9H334-4"/>
</dbReference>
<dbReference type="ProteomicsDB" id="80667">
    <molecule id="Q9H334-5"/>
</dbReference>
<dbReference type="Pumba" id="Q9H334"/>
<dbReference type="ABCD" id="Q9H334">
    <property type="antibodies" value="3 sequenced antibodies"/>
</dbReference>
<dbReference type="Antibodypedia" id="902">
    <property type="antibodies" value="886 antibodies from 50 providers"/>
</dbReference>
<dbReference type="DNASU" id="27086"/>
<dbReference type="Ensembl" id="ENST00000318779.7">
    <molecule id="Q9H334-5"/>
    <property type="protein sequence ID" value="ENSP00000318721.3"/>
    <property type="gene ID" value="ENSG00000114861.24"/>
</dbReference>
<dbReference type="Ensembl" id="ENST00000318789.11">
    <molecule id="Q9H334-1"/>
    <property type="protein sequence ID" value="ENSP00000318902.5"/>
    <property type="gene ID" value="ENSG00000114861.24"/>
</dbReference>
<dbReference type="Ensembl" id="ENST00000484350.5">
    <molecule id="Q9H334-6"/>
    <property type="protein sequence ID" value="ENSP00000417857.1"/>
    <property type="gene ID" value="ENSG00000114861.24"/>
</dbReference>
<dbReference type="Ensembl" id="ENST00000493089.7">
    <molecule id="Q9H334-7"/>
    <property type="protein sequence ID" value="ENSP00000418524.1"/>
    <property type="gene ID" value="ENSG00000114861.24"/>
</dbReference>
<dbReference type="Ensembl" id="ENST00000498215.7">
    <molecule id="Q9H334-1"/>
    <property type="protein sequence ID" value="ENSP00000418102.1"/>
    <property type="gene ID" value="ENSG00000114861.24"/>
</dbReference>
<dbReference type="Ensembl" id="ENST00000648380.1">
    <molecule id="Q9H334-1"/>
    <property type="protein sequence ID" value="ENSP00000497344.1"/>
    <property type="gene ID" value="ENSG00000114861.24"/>
</dbReference>
<dbReference type="Ensembl" id="ENST00000648426.1">
    <molecule id="Q9H334-8"/>
    <property type="protein sequence ID" value="ENSP00000498110.1"/>
    <property type="gene ID" value="ENSG00000114861.24"/>
</dbReference>
<dbReference type="Ensembl" id="ENST00000648710.2">
    <molecule id="Q9H334-7"/>
    <property type="protein sequence ID" value="ENSP00000497430.2"/>
    <property type="gene ID" value="ENSG00000114861.24"/>
</dbReference>
<dbReference type="Ensembl" id="ENST00000648718.1">
    <molecule id="Q9H334-7"/>
    <property type="protein sequence ID" value="ENSP00000496810.1"/>
    <property type="gene ID" value="ENSG00000114861.24"/>
</dbReference>
<dbReference type="Ensembl" id="ENST00000649528.3">
    <molecule id="Q9H334-1"/>
    <property type="protein sequence ID" value="ENSP00000497369.1"/>
    <property type="gene ID" value="ENSG00000114861.24"/>
</dbReference>
<dbReference type="Ensembl" id="ENST00000649631.1">
    <molecule id="Q9H334-1"/>
    <property type="protein sequence ID" value="ENSP00000496990.1"/>
    <property type="gene ID" value="ENSG00000114861.24"/>
</dbReference>
<dbReference type="Ensembl" id="ENST00000650068.2">
    <molecule id="Q9H334-1"/>
    <property type="protein sequence ID" value="ENSP00000497454.2"/>
    <property type="gene ID" value="ENSG00000114861.24"/>
</dbReference>
<dbReference type="GeneID" id="27086"/>
<dbReference type="KEGG" id="hsa:27086"/>
<dbReference type="MANE-Select" id="ENST00000649528.3">
    <property type="protein sequence ID" value="ENSP00000497369.1"/>
    <property type="RefSeq nucleotide sequence ID" value="NM_001349338.3"/>
    <property type="RefSeq protein sequence ID" value="NP_001336267.1"/>
</dbReference>
<dbReference type="UCSC" id="uc003dol.4">
    <molecule id="Q9H334-1"/>
    <property type="organism name" value="human"/>
</dbReference>
<dbReference type="AGR" id="HGNC:3823"/>
<dbReference type="CTD" id="27086"/>
<dbReference type="DisGeNET" id="27086"/>
<dbReference type="GeneCards" id="FOXP1"/>
<dbReference type="GeneReviews" id="FOXP1"/>
<dbReference type="HGNC" id="HGNC:3823">
    <property type="gene designation" value="FOXP1"/>
</dbReference>
<dbReference type="HPA" id="ENSG00000114861">
    <property type="expression patterns" value="Low tissue specificity"/>
</dbReference>
<dbReference type="MalaCards" id="FOXP1"/>
<dbReference type="MIM" id="605515">
    <property type="type" value="gene"/>
</dbReference>
<dbReference type="MIM" id="613670">
    <property type="type" value="phenotype"/>
</dbReference>
<dbReference type="neXtProt" id="NX_Q9H334"/>
<dbReference type="OpenTargets" id="ENSG00000114861"/>
<dbReference type="Orphanet" id="585877">
    <property type="disease" value="B-lymphoblastic leukemia/lymphoma with recurrent genetic abnormality"/>
</dbReference>
<dbReference type="Orphanet" id="391372">
    <property type="disease" value="FOXP1 Syndrome"/>
</dbReference>
<dbReference type="Orphanet" id="52417">
    <property type="disease" value="MALT lymphoma"/>
</dbReference>
<dbReference type="PharmGKB" id="PA28241"/>
<dbReference type="VEuPathDB" id="HostDB:ENSG00000114861"/>
<dbReference type="eggNOG" id="KOG4385">
    <property type="taxonomic scope" value="Eukaryota"/>
</dbReference>
<dbReference type="GeneTree" id="ENSGT00940000159892"/>
<dbReference type="HOGENOM" id="CLU_168648_0_0_1"/>
<dbReference type="InParanoid" id="Q9H334"/>
<dbReference type="OMA" id="HEEHSHN"/>
<dbReference type="OrthoDB" id="5830876at2759"/>
<dbReference type="PAN-GO" id="Q9H334">
    <property type="GO annotations" value="4 GO annotations based on evolutionary models"/>
</dbReference>
<dbReference type="PhylomeDB" id="Q9H334"/>
<dbReference type="TreeFam" id="TF326978"/>
<dbReference type="PathwayCommons" id="Q9H334"/>
<dbReference type="Reactome" id="R-HSA-452723">
    <molecule id="Q9H334-8"/>
    <property type="pathway name" value="Transcriptional regulation of pluripotent stem cells"/>
</dbReference>
<dbReference type="SignaLink" id="Q9H334"/>
<dbReference type="SIGNOR" id="Q9H334"/>
<dbReference type="BioGRID-ORCS" id="27086">
    <property type="hits" value="17 hits in 1184 CRISPR screens"/>
</dbReference>
<dbReference type="ChiTaRS" id="FOXP1">
    <property type="organism name" value="human"/>
</dbReference>
<dbReference type="EvolutionaryTrace" id="Q9H334"/>
<dbReference type="GeneWiki" id="FOXP1"/>
<dbReference type="GenomeRNAi" id="27086"/>
<dbReference type="Pharos" id="Q9H334">
    <property type="development level" value="Tbio"/>
</dbReference>
<dbReference type="PRO" id="PR:Q9H334"/>
<dbReference type="Proteomes" id="UP000005640">
    <property type="component" value="Chromosome 3"/>
</dbReference>
<dbReference type="RNAct" id="Q9H334">
    <property type="molecule type" value="protein"/>
</dbReference>
<dbReference type="Bgee" id="ENSG00000114861">
    <property type="expression patterns" value="Expressed in pancreatic ductal cell and 196 other cell types or tissues"/>
</dbReference>
<dbReference type="ExpressionAtlas" id="Q9H334">
    <property type="expression patterns" value="baseline and differential"/>
</dbReference>
<dbReference type="GO" id="GO:0000785">
    <property type="term" value="C:chromatin"/>
    <property type="evidence" value="ECO:0000247"/>
    <property type="project" value="NTNU_SB"/>
</dbReference>
<dbReference type="GO" id="GO:0005654">
    <property type="term" value="C:nucleoplasm"/>
    <property type="evidence" value="ECO:0000304"/>
    <property type="project" value="Reactome"/>
</dbReference>
<dbReference type="GO" id="GO:0005634">
    <property type="term" value="C:nucleus"/>
    <property type="evidence" value="ECO:0000314"/>
    <property type="project" value="UniProtKB"/>
</dbReference>
<dbReference type="GO" id="GO:0001046">
    <property type="term" value="F:core promoter sequence-specific DNA binding"/>
    <property type="evidence" value="ECO:0000314"/>
    <property type="project" value="UniProtKB"/>
</dbReference>
<dbReference type="GO" id="GO:0000981">
    <property type="term" value="F:DNA-binding transcription factor activity, RNA polymerase II-specific"/>
    <property type="evidence" value="ECO:0000247"/>
    <property type="project" value="NTNU_SB"/>
</dbReference>
<dbReference type="GO" id="GO:0001227">
    <property type="term" value="F:DNA-binding transcription repressor activity, RNA polymerase II-specific"/>
    <property type="evidence" value="ECO:0000318"/>
    <property type="project" value="GO_Central"/>
</dbReference>
<dbReference type="GO" id="GO:0042802">
    <property type="term" value="F:identical protein binding"/>
    <property type="evidence" value="ECO:0000353"/>
    <property type="project" value="IntAct"/>
</dbReference>
<dbReference type="GO" id="GO:0050681">
    <property type="term" value="F:nuclear androgen receptor binding"/>
    <property type="evidence" value="ECO:0000314"/>
    <property type="project" value="UniProtKB"/>
</dbReference>
<dbReference type="GO" id="GO:0000978">
    <property type="term" value="F:RNA polymerase II cis-regulatory region sequence-specific DNA binding"/>
    <property type="evidence" value="ECO:0000318"/>
    <property type="project" value="GO_Central"/>
</dbReference>
<dbReference type="GO" id="GO:1990837">
    <property type="term" value="F:sequence-specific double-stranded DNA binding"/>
    <property type="evidence" value="ECO:0000314"/>
    <property type="project" value="ARUK-UCL"/>
</dbReference>
<dbReference type="GO" id="GO:0008270">
    <property type="term" value="F:zinc ion binding"/>
    <property type="evidence" value="ECO:0007669"/>
    <property type="project" value="UniProtKB-KW"/>
</dbReference>
<dbReference type="GO" id="GO:0071356">
    <property type="term" value="P:cellular response to tumor necrosis factor"/>
    <property type="evidence" value="ECO:0007669"/>
    <property type="project" value="Ensembl"/>
</dbReference>
<dbReference type="GO" id="GO:0006974">
    <property type="term" value="P:DNA damage response"/>
    <property type="evidence" value="ECO:0000315"/>
    <property type="project" value="ARUK-UCL"/>
</dbReference>
<dbReference type="GO" id="GO:0042118">
    <property type="term" value="P:endothelial cell activation"/>
    <property type="evidence" value="ECO:0000315"/>
    <property type="project" value="UniProtKB"/>
</dbReference>
<dbReference type="GO" id="GO:0042116">
    <property type="term" value="P:macrophage activation"/>
    <property type="evidence" value="ECO:0000314"/>
    <property type="project" value="UniProtKB"/>
</dbReference>
<dbReference type="GO" id="GO:0042117">
    <property type="term" value="P:monocyte activation"/>
    <property type="evidence" value="ECO:0000314"/>
    <property type="project" value="UniProtKB"/>
</dbReference>
<dbReference type="GO" id="GO:0060766">
    <property type="term" value="P:negative regulation of androgen receptor signaling pathway"/>
    <property type="evidence" value="ECO:0000314"/>
    <property type="project" value="UniProtKB"/>
</dbReference>
<dbReference type="GO" id="GO:0002903">
    <property type="term" value="P:negative regulation of B cell apoptotic process"/>
    <property type="evidence" value="ECO:0000314"/>
    <property type="project" value="UniProtKB"/>
</dbReference>
<dbReference type="GO" id="GO:0061052">
    <property type="term" value="P:negative regulation of cell growth involved in cardiac muscle cell development"/>
    <property type="evidence" value="ECO:0007669"/>
    <property type="project" value="Ensembl"/>
</dbReference>
<dbReference type="GO" id="GO:0045892">
    <property type="term" value="P:negative regulation of DNA-templated transcription"/>
    <property type="evidence" value="ECO:0000314"/>
    <property type="project" value="UniProtKB"/>
</dbReference>
<dbReference type="GO" id="GO:0010629">
    <property type="term" value="P:negative regulation of gene expression"/>
    <property type="evidence" value="ECO:0000314"/>
    <property type="project" value="ARUK-UCL"/>
</dbReference>
<dbReference type="GO" id="GO:0036035">
    <property type="term" value="P:osteoclast development"/>
    <property type="evidence" value="ECO:0000314"/>
    <property type="project" value="UniProtKB"/>
</dbReference>
<dbReference type="GO" id="GO:0030316">
    <property type="term" value="P:osteoclast differentiation"/>
    <property type="evidence" value="ECO:0000314"/>
    <property type="project" value="UniProtKB"/>
</dbReference>
<dbReference type="GO" id="GO:0050861">
    <property type="term" value="P:positive regulation of B cell receptor signaling pathway"/>
    <property type="evidence" value="ECO:0000315"/>
    <property type="project" value="ARUK-UCL"/>
</dbReference>
<dbReference type="GO" id="GO:0010595">
    <property type="term" value="P:positive regulation of endothelial cell migration"/>
    <property type="evidence" value="ECO:0000315"/>
    <property type="project" value="UniProtKB"/>
</dbReference>
<dbReference type="GO" id="GO:1901300">
    <property type="term" value="P:positive regulation of hydrogen peroxide-mediated programmed cell death"/>
    <property type="evidence" value="ECO:0007669"/>
    <property type="project" value="Ensembl"/>
</dbReference>
<dbReference type="GO" id="GO:0032745">
    <property type="term" value="P:positive regulation of interleukin-21 production"/>
    <property type="evidence" value="ECO:0000250"/>
    <property type="project" value="UniProtKB"/>
</dbReference>
<dbReference type="GO" id="GO:0048661">
    <property type="term" value="P:positive regulation of smooth muscle cell proliferation"/>
    <property type="evidence" value="ECO:0000315"/>
    <property type="project" value="UniProtKB"/>
</dbReference>
<dbReference type="GO" id="GO:2000341">
    <property type="term" value="P:regulation of chemokine (C-X-C motif) ligand 2 production"/>
    <property type="evidence" value="ECO:0000314"/>
    <property type="project" value="UniProtKB"/>
</dbReference>
<dbReference type="GO" id="GO:1900424">
    <property type="term" value="P:regulation of defense response to bacterium"/>
    <property type="evidence" value="ECO:0000314"/>
    <property type="project" value="UniProtKB"/>
</dbReference>
<dbReference type="GO" id="GO:1901509">
    <property type="term" value="P:regulation of endothelial tube morphogenesis"/>
    <property type="evidence" value="ECO:0000315"/>
    <property type="project" value="UniProtKB"/>
</dbReference>
<dbReference type="GO" id="GO:0010468">
    <property type="term" value="P:regulation of gene expression"/>
    <property type="evidence" value="ECO:0000315"/>
    <property type="project" value="UniProtKB"/>
</dbReference>
<dbReference type="GO" id="GO:0050727">
    <property type="term" value="P:regulation of inflammatory response"/>
    <property type="evidence" value="ECO:0000314"/>
    <property type="project" value="UniProtKB"/>
</dbReference>
<dbReference type="GO" id="GO:0032651">
    <property type="term" value="P:regulation of interleukin-1 beta production"/>
    <property type="evidence" value="ECO:0000314"/>
    <property type="project" value="UniProtKB"/>
</dbReference>
<dbReference type="GO" id="GO:0032655">
    <property type="term" value="P:regulation of interleukin-12 production"/>
    <property type="evidence" value="ECO:0000314"/>
    <property type="project" value="UniProtKB"/>
</dbReference>
<dbReference type="GO" id="GO:1901256">
    <property type="term" value="P:regulation of macrophage colony-stimulating factor production"/>
    <property type="evidence" value="ECO:0000314"/>
    <property type="project" value="UniProtKB"/>
</dbReference>
<dbReference type="GO" id="GO:0045655">
    <property type="term" value="P:regulation of monocyte differentiation"/>
    <property type="evidence" value="ECO:0000314"/>
    <property type="project" value="UniProtKB"/>
</dbReference>
<dbReference type="GO" id="GO:0006357">
    <property type="term" value="P:regulation of transcription by RNA polymerase II"/>
    <property type="evidence" value="ECO:0000318"/>
    <property type="project" value="GO_Central"/>
</dbReference>
<dbReference type="GO" id="GO:0032680">
    <property type="term" value="P:regulation of tumor necrosis factor production"/>
    <property type="evidence" value="ECO:0000314"/>
    <property type="project" value="UniProtKB"/>
</dbReference>
<dbReference type="GO" id="GO:0032496">
    <property type="term" value="P:response to lipopolysaccharide"/>
    <property type="evidence" value="ECO:0000314"/>
    <property type="project" value="UniProtKB"/>
</dbReference>
<dbReference type="GO" id="GO:0033574">
    <property type="term" value="P:response to testosterone"/>
    <property type="evidence" value="ECO:0007669"/>
    <property type="project" value="Ensembl"/>
</dbReference>
<dbReference type="GO" id="GO:0021756">
    <property type="term" value="P:striatum development"/>
    <property type="evidence" value="ECO:0007669"/>
    <property type="project" value="Ensembl"/>
</dbReference>
<dbReference type="GO" id="GO:0061470">
    <property type="term" value="P:T follicular helper cell differentiation"/>
    <property type="evidence" value="ECO:0000250"/>
    <property type="project" value="UniProtKB"/>
</dbReference>
<dbReference type="CDD" id="cd20065">
    <property type="entry name" value="FH_FOXP2"/>
    <property type="match status" value="1"/>
</dbReference>
<dbReference type="FunFam" id="1.20.5.340:FF:000005">
    <property type="entry name" value="Forkhead box P1, isoform CRA_f"/>
    <property type="match status" value="1"/>
</dbReference>
<dbReference type="FunFam" id="1.10.10.10:FF:000010">
    <property type="entry name" value="Forkhead box P2 isoform B"/>
    <property type="match status" value="1"/>
</dbReference>
<dbReference type="Gene3D" id="1.20.5.340">
    <property type="match status" value="1"/>
</dbReference>
<dbReference type="Gene3D" id="1.10.10.10">
    <property type="entry name" value="Winged helix-like DNA-binding domain superfamily/Winged helix DNA-binding domain"/>
    <property type="match status" value="1"/>
</dbReference>
<dbReference type="InterPro" id="IPR047412">
    <property type="entry name" value="FH_FOXP1_P2"/>
</dbReference>
<dbReference type="InterPro" id="IPR001766">
    <property type="entry name" value="Fork_head_dom"/>
</dbReference>
<dbReference type="InterPro" id="IPR050998">
    <property type="entry name" value="FOXP"/>
</dbReference>
<dbReference type="InterPro" id="IPR032354">
    <property type="entry name" value="FOXP-CC"/>
</dbReference>
<dbReference type="InterPro" id="IPR030456">
    <property type="entry name" value="TF_fork_head_CS_2"/>
</dbReference>
<dbReference type="InterPro" id="IPR036388">
    <property type="entry name" value="WH-like_DNA-bd_sf"/>
</dbReference>
<dbReference type="InterPro" id="IPR036390">
    <property type="entry name" value="WH_DNA-bd_sf"/>
</dbReference>
<dbReference type="PANTHER" id="PTHR45796">
    <property type="entry name" value="FORKHEAD BOX P, ISOFORM C"/>
    <property type="match status" value="1"/>
</dbReference>
<dbReference type="PANTHER" id="PTHR45796:SF3">
    <property type="entry name" value="FORKHEAD BOX PROTEIN P1"/>
    <property type="match status" value="1"/>
</dbReference>
<dbReference type="Pfam" id="PF00250">
    <property type="entry name" value="Forkhead"/>
    <property type="match status" value="1"/>
</dbReference>
<dbReference type="Pfam" id="PF16159">
    <property type="entry name" value="FOXP-CC"/>
    <property type="match status" value="1"/>
</dbReference>
<dbReference type="PRINTS" id="PR00053">
    <property type="entry name" value="FORKHEAD"/>
</dbReference>
<dbReference type="SMART" id="SM00339">
    <property type="entry name" value="FH"/>
    <property type="match status" value="1"/>
</dbReference>
<dbReference type="SUPFAM" id="SSF46785">
    <property type="entry name" value="Winged helix' DNA-binding domain"/>
    <property type="match status" value="1"/>
</dbReference>
<dbReference type="PROSITE" id="PS00658">
    <property type="entry name" value="FORK_HEAD_2"/>
    <property type="match status" value="1"/>
</dbReference>
<dbReference type="PROSITE" id="PS50039">
    <property type="entry name" value="FORK_HEAD_3"/>
    <property type="match status" value="1"/>
</dbReference>
<dbReference type="PROSITE" id="PS00028">
    <property type="entry name" value="ZINC_FINGER_C2H2_1"/>
    <property type="match status" value="1"/>
</dbReference>
<name>FOXP1_HUMAN</name>
<comment type="function">
    <text evidence="2 5 7 8 13 15 16 17 27 28">Transcriptional repressor (PubMed:18347093, PubMed:26647308). Can act with CTBP1 to synergistically repress transcription but CTPBP1 is not essential (By similarity). Plays an important role in the specification and differentiation of lung epithelium. Acts cooperatively with FOXP4 to regulate lung secretory epithelial cell fate and regeneration by restricting the goblet cell lineage program; the function may involve regulation of AGR2. Essential transcriptional regulator of B-cell development. Involved in regulation of cardiac muscle cell proliferation. Involved in the columnar organization of spinal motor neurons. Promotes the formation of the lateral motor neuron column (LMC) and the preganglionic motor column (PGC) and is required for respective appropriate motor axon projections. The segment-appropriate generation of spinal cord motor columns requires cooperation with other Hox proteins. Can regulate PITX3 promoter activity; may promote midbrain identity in embryonic stem cell-derived dopamine neurons by regulating PITX3. Negatively regulates the differentiation of T follicular helper cells T(FH)s. Involved in maintenance of hair follicle stem cell quiescence; the function probably involves regulation of FGF18 (By similarity). Represses transcription of various pro-apoptotic genes and cooperates with NF-kappa B-signaling in promoting B-cell expansion by inhibition of caspase-dependent apoptosis (PubMed:25267198). Binds to CSF1R promoter elements and is involved in regulation of monocyte differentiation and macrophage functions; repression of CSF1R in monocytes seems to involve NCOR2 as corepressor (PubMed:15286807, PubMed:18347093, PubMed:18799727). Involved in endothelial cell proliferation, tube formation and migration indicative for a role in angiogenesis; the role in neovascularization seems to implicate suppression of SEMA5B (PubMed:24023716). Can negatively regulate androgen receptor signaling (PubMed:18640093). Acts as a transcriptional activator of the FBXL7 promoter; this activity is regulated by AURKA (PubMed:28218735).</text>
</comment>
<comment type="function">
    <molecule>Isoform 8</molecule>
    <text evidence="2 12">Involved in transcriptional regulation in embryonic stem cells (ESCs). Stimulates expression of transcription factors that are required for pluripotency and decreases expression of differentiation-associated genes. Has distinct DNA-binding specifities as compared to the canonical form and preferentially binds DNA with the sequence 5'-CGATACAA-3' (or closely related sequences) (PubMed:21924763). Promotes ESC self-renewal and pluripotency (By similarity).</text>
</comment>
<comment type="subunit">
    <text evidence="2 6 7 14 16 17 19 20">Forms homodimers and heterodimers with FOXP2 and FOXP4 (PubMed:25027557). Dimerization is required for DNA-binding. Self-associates (PubMed:26647308). Interacts with CTBP1 (By similarity). Interacts with NCOR2 and AR (PubMed:18347093, PubMed:18640093). Interacts with FOXP2 (PubMed:26647308). Interacts with TBR1 (PubMed:30250039). Interacts with AURKA; this interaction facilitates the phosphorylation of FOXP1, which suppresses the expression of FBXL7 (PubMed:28218735). Interacts with ZMYM2 (PubMed:32891193).</text>
</comment>
<comment type="interaction">
    <interactant intactId="EBI-983809">
        <id>Q9H334</id>
    </interactant>
    <interactant intactId="EBI-983809">
        <id>Q9H334</id>
        <label>FOXP1</label>
    </interactant>
    <organismsDiffer>false</organismsDiffer>
    <experiments>8</experiments>
</comment>
<comment type="interaction">
    <interactant intactId="EBI-983809">
        <id>Q9H334</id>
    </interactant>
    <interactant intactId="EBI-983612">
        <id>O15409</id>
        <label>FOXP2</label>
    </interactant>
    <organismsDiffer>false</organismsDiffer>
    <experiments>16</experiments>
</comment>
<comment type="interaction">
    <interactant intactId="EBI-983809">
        <id>Q9H334</id>
    </interactant>
    <interactant intactId="EBI-1054619">
        <id>Q8IVH2</id>
        <label>FOXP4</label>
    </interactant>
    <organismsDiffer>false</organismsDiffer>
    <experiments>6</experiments>
</comment>
<comment type="subcellular location">
    <subcellularLocation>
        <location evidence="14 16">Nucleus</location>
    </subcellularLocation>
    <text evidence="16">Not found in the nucleolus.</text>
</comment>
<comment type="alternative products">
    <event type="alternative splicing"/>
    <isoform>
        <id>Q9H334-1</id>
        <name>1</name>
        <sequence type="displayed"/>
    </isoform>
    <isoform>
        <id>Q9H334-3</id>
        <name>3</name>
        <sequence type="described" ref="VSP_001555 VSP_001556"/>
    </isoform>
    <isoform>
        <id>Q9H334-4</id>
        <name>4</name>
        <sequence type="described" ref="VSP_001555"/>
    </isoform>
    <isoform>
        <id>Q9H334-5</id>
        <name>5</name>
        <sequence type="described" ref="VSP_043462 VSP_043463"/>
    </isoform>
    <isoform>
        <id>Q9H334-6</id>
        <name>6</name>
        <sequence type="described" ref="VSP_001556"/>
    </isoform>
    <isoform>
        <id>Q9H334-7</id>
        <name>7</name>
        <sequence type="described" ref="VSP_046930"/>
    </isoform>
    <isoform>
        <id>Q9H334-8</id>
        <name>8</name>
        <name>FOXP1-ES</name>
        <sequence type="described" ref="VSP_057341"/>
    </isoform>
    <text>Additional isoforms seem to exist.</text>
</comment>
<comment type="tissue specificity">
    <text evidence="12">Isoform 8 is specifically expressed in embryonic stem cells.</text>
</comment>
<comment type="induction">
    <text evidence="7">By androgen in an isoform-specific manner; expression of isoform 4 is greatly induced.</text>
</comment>
<comment type="domain">
    <text evidence="2">The leucine-zipper is required for dimerization and transcriptional repression.</text>
</comment>
<comment type="disease">
    <text>A chromosomal aberration involving FOXP1 is found in acute lymphoblastic leukemia. Translocation t(9;3)(p13;p14.1) with PAX5.</text>
</comment>
<comment type="disease" evidence="10 11 16 18">
    <disease id="DI-02984">
        <name>Intellectual developmental disorder with language impairment and with or without autistic features</name>
        <acronym>IDDLA</acronym>
        <description>A developmental disorder characterized by mild to moderate intellectual disability, language impairment, and autistic features in some patients. Patients show global delay, delayed walking, severely delayed speech development, and behavioral abnormalities, including irritability, hyperactivity, aggression, and stereotypical rigid behaviors.</description>
        <dbReference type="MIM" id="613670"/>
    </disease>
    <text>The disease is caused by variants affecting the gene represented in this entry.</text>
</comment>
<comment type="miscellaneous">
    <molecule>Isoform 3</molecule>
    <text evidence="26">Incomplete sequence.</text>
</comment>
<comment type="miscellaneous">
    <molecule>Isoform 4</molecule>
    <text evidence="26">Incomplete sequence.</text>
</comment>
<comment type="miscellaneous">
    <molecule>Isoform 7</molecule>
    <text evidence="26">May be due to competing acceptor splice site.</text>
</comment>
<comment type="sequence caution" evidence="26">
    <conflict type="frameshift">
        <sequence resource="EMBL-CDS" id="AAF36135"/>
    </conflict>
</comment>
<comment type="sequence caution" evidence="26">
    <conflict type="miscellaneous discrepancy">
        <sequence resource="EMBL-CDS" id="AAG47634"/>
    </conflict>
    <text>Aberrant splicing.</text>
</comment>
<comment type="sequence caution" evidence="26">
    <conflict type="erroneous initiation">
        <sequence resource="EMBL-CDS" id="ABI33105"/>
    </conflict>
</comment>
<comment type="sequence caution" evidence="26">
    <conflict type="erroneous initiation">
        <sequence resource="EMBL-CDS" id="BAB55005"/>
    </conflict>
</comment>
<comment type="online information" name="Atlas of Genetics and Cytogenetics in Oncology and Haematology">
    <link uri="https://atlasgeneticsoncology.org/gene/40632/FOXP1"/>
</comment>
<organism>
    <name type="scientific">Homo sapiens</name>
    <name type="common">Human</name>
    <dbReference type="NCBI Taxonomy" id="9606"/>
    <lineage>
        <taxon>Eukaryota</taxon>
        <taxon>Metazoa</taxon>
        <taxon>Chordata</taxon>
        <taxon>Craniata</taxon>
        <taxon>Vertebrata</taxon>
        <taxon>Euteleostomi</taxon>
        <taxon>Mammalia</taxon>
        <taxon>Eutheria</taxon>
        <taxon>Euarchontoglires</taxon>
        <taxon>Primates</taxon>
        <taxon>Haplorrhini</taxon>
        <taxon>Catarrhini</taxon>
        <taxon>Hominidae</taxon>
        <taxon>Homo</taxon>
    </lineage>
</organism>
<sequence>MMQESGTETKSNGSAIQNGSGGSNHLLECGGLREGRSNGETPAVDIGAADLAHAQQQQQQALQVARQLLLQQQQQQQVSGLKSPKRNDKQPALQVPVSVAMMTPQVITPQQMQQILQQQVLSPQQLQVLLQQQQALMLQQQQLQEFYKKQQEQLQLQLLQQQHAGKQPKEQQQVATQQLAFQQQLLQMQQLQQQHLLSLQRQGLLTIQPGQPALPLQPLAQGMIPTELQQLWKEVTSAHTAEETTGNNHSSLDLTTTCVSSSAPSKTSLIMNPHASTNGQLSVHTPKRESLSHEEHPHSHPLYGHGVCKWPGCEAVCEDFQSFLKHLNSEHALDDRSTAQCRVQMQVVQQLELQLAKDKERLQAMMTHLHVKSTEPKAAPQPLNLVSSVTLSKSASEASPQSLPHTPTTPTAPLTPVTQGPSVITTTSMHTVGPIRRRYSDKYNVPISSADIAQNQEFYKNAEVRPPFTYASLIRQAILESPEKQLTLNEIYNWFTRMFAYFRRNAATWKNAVRHNLSLHKCFVRVENVKGAVWTVDEVEFQKRRPQKISGNPSLIKNMQSSHAYCTPLNAALQASMAENSIPLYTTASMGNPTLGNLASAIREELNGAMEHTNSNESDSSPGRSPMQAVHPVHVKEEPLDPEEAEGPLSLVTTANHSPDFDHDRDYEDEPVNEDME</sequence>
<protein>
    <recommendedName>
        <fullName>Forkhead box protein P1</fullName>
    </recommendedName>
    <alternativeName>
        <fullName evidence="23">Mac-1-regulated forkhead</fullName>
        <shortName evidence="23">MFH</shortName>
    </alternativeName>
</protein>